<feature type="chain" id="PRO_0000296970" description="Keratin, type I cuticular Ha1">
    <location>
        <begin position="1"/>
        <end position="416"/>
    </location>
</feature>
<feature type="domain" description="IF rod" evidence="1">
    <location>
        <begin position="56"/>
        <end position="367"/>
    </location>
</feature>
<feature type="region of interest" description="Head">
    <location>
        <begin position="1"/>
        <end position="56"/>
    </location>
</feature>
<feature type="region of interest" description="Coil 1A">
    <location>
        <begin position="57"/>
        <end position="91"/>
    </location>
</feature>
<feature type="region of interest" description="Linker 1">
    <location>
        <begin position="92"/>
        <end position="102"/>
    </location>
</feature>
<feature type="region of interest" description="Coil 1B">
    <location>
        <begin position="103"/>
        <end position="203"/>
    </location>
</feature>
<feature type="region of interest" description="Linker 12">
    <location>
        <begin position="204"/>
        <end position="219"/>
    </location>
</feature>
<feature type="region of interest" description="Coil 2">
    <location>
        <begin position="220"/>
        <end position="363"/>
    </location>
</feature>
<feature type="region of interest" description="Tail">
    <location>
        <begin position="364"/>
        <end position="416"/>
    </location>
</feature>
<feature type="site" description="Stutter">
    <location>
        <position position="305"/>
    </location>
</feature>
<gene>
    <name type="primary">KRT31</name>
    <name type="synonym">KRTHA1</name>
</gene>
<proteinExistence type="evidence at transcript level"/>
<keyword id="KW-0175">Coiled coil</keyword>
<keyword id="KW-0403">Intermediate filament</keyword>
<keyword id="KW-0416">Keratin</keyword>
<keyword id="KW-1185">Reference proteome</keyword>
<dbReference type="EMBL" id="AB222153">
    <property type="protein sequence ID" value="BAF62398.1"/>
    <property type="molecule type" value="mRNA"/>
</dbReference>
<dbReference type="RefSeq" id="NP_001092021.1">
    <property type="nucleotide sequence ID" value="NM_001098551.1"/>
</dbReference>
<dbReference type="SMR" id="A5A6M5"/>
<dbReference type="FunCoup" id="A5A6M5">
    <property type="interactions" value="233"/>
</dbReference>
<dbReference type="STRING" id="9598.ENSPTRP00000063808"/>
<dbReference type="PaxDb" id="9598-ENSPTRP00000015607"/>
<dbReference type="Ensembl" id="ENSPTRT00000016863.3">
    <property type="protein sequence ID" value="ENSPTRP00000015607.2"/>
    <property type="gene ID" value="ENSPTRG00000009161.5"/>
</dbReference>
<dbReference type="GeneID" id="454661"/>
<dbReference type="KEGG" id="ptr:454661"/>
<dbReference type="CTD" id="3881"/>
<dbReference type="VGNC" id="VGNC:50416">
    <property type="gene designation" value="KRT31"/>
</dbReference>
<dbReference type="eggNOG" id="ENOG502SNBF">
    <property type="taxonomic scope" value="Eukaryota"/>
</dbReference>
<dbReference type="GeneTree" id="ENSGT00940000163841"/>
<dbReference type="HOGENOM" id="CLU_012560_8_0_1"/>
<dbReference type="InParanoid" id="A5A6M5"/>
<dbReference type="OrthoDB" id="12824at9604"/>
<dbReference type="TreeFam" id="TF332742"/>
<dbReference type="Proteomes" id="UP000002277">
    <property type="component" value="Chromosome 17"/>
</dbReference>
<dbReference type="Bgee" id="ENSPTRG00000009161">
    <property type="expression patterns" value="Expressed in dorsolateral prefrontal cortex and 5 other cell types or tissues"/>
</dbReference>
<dbReference type="GO" id="GO:0005856">
    <property type="term" value="C:cytoskeleton"/>
    <property type="evidence" value="ECO:0000318"/>
    <property type="project" value="GO_Central"/>
</dbReference>
<dbReference type="GO" id="GO:0005882">
    <property type="term" value="C:intermediate filament"/>
    <property type="evidence" value="ECO:0007669"/>
    <property type="project" value="UniProtKB-KW"/>
</dbReference>
<dbReference type="GO" id="GO:0005198">
    <property type="term" value="F:structural molecule activity"/>
    <property type="evidence" value="ECO:0007669"/>
    <property type="project" value="InterPro"/>
</dbReference>
<dbReference type="GO" id="GO:0030855">
    <property type="term" value="P:epithelial cell differentiation"/>
    <property type="evidence" value="ECO:0000318"/>
    <property type="project" value="GO_Central"/>
</dbReference>
<dbReference type="GO" id="GO:0045109">
    <property type="term" value="P:intermediate filament organization"/>
    <property type="evidence" value="ECO:0000318"/>
    <property type="project" value="GO_Central"/>
</dbReference>
<dbReference type="FunFam" id="1.20.5.1160:FF:000002">
    <property type="entry name" value="Type I keratin 10"/>
    <property type="match status" value="1"/>
</dbReference>
<dbReference type="FunFam" id="1.20.5.170:FF:000002">
    <property type="entry name" value="Type I keratin KA11"/>
    <property type="match status" value="1"/>
</dbReference>
<dbReference type="FunFam" id="1.20.5.500:FF:000001">
    <property type="entry name" value="Type II keratin 23"/>
    <property type="match status" value="1"/>
</dbReference>
<dbReference type="Gene3D" id="1.20.5.170">
    <property type="match status" value="1"/>
</dbReference>
<dbReference type="Gene3D" id="1.20.5.500">
    <property type="entry name" value="Single helix bin"/>
    <property type="match status" value="1"/>
</dbReference>
<dbReference type="Gene3D" id="1.20.5.1160">
    <property type="entry name" value="Vasodilator-stimulated phosphoprotein"/>
    <property type="match status" value="1"/>
</dbReference>
<dbReference type="InterPro" id="IPR018039">
    <property type="entry name" value="IF_conserved"/>
</dbReference>
<dbReference type="InterPro" id="IPR039008">
    <property type="entry name" value="IF_rod_dom"/>
</dbReference>
<dbReference type="InterPro" id="IPR002957">
    <property type="entry name" value="Keratin_I"/>
</dbReference>
<dbReference type="PANTHER" id="PTHR23239">
    <property type="entry name" value="INTERMEDIATE FILAMENT"/>
    <property type="match status" value="1"/>
</dbReference>
<dbReference type="PANTHER" id="PTHR23239:SF97">
    <property type="entry name" value="KERATIN, TYPE I CUTICULAR HA1"/>
    <property type="match status" value="1"/>
</dbReference>
<dbReference type="Pfam" id="PF00038">
    <property type="entry name" value="Filament"/>
    <property type="match status" value="1"/>
</dbReference>
<dbReference type="PRINTS" id="PR01248">
    <property type="entry name" value="TYPE1KERATIN"/>
</dbReference>
<dbReference type="SMART" id="SM01391">
    <property type="entry name" value="Filament"/>
    <property type="match status" value="1"/>
</dbReference>
<dbReference type="SUPFAM" id="SSF64593">
    <property type="entry name" value="Intermediate filament protein, coiled coil region"/>
    <property type="match status" value="2"/>
</dbReference>
<dbReference type="PROSITE" id="PS00226">
    <property type="entry name" value="IF_ROD_1"/>
    <property type="match status" value="1"/>
</dbReference>
<dbReference type="PROSITE" id="PS51842">
    <property type="entry name" value="IF_ROD_2"/>
    <property type="match status" value="1"/>
</dbReference>
<evidence type="ECO:0000255" key="1">
    <source>
        <dbReference type="PROSITE-ProRule" id="PRU01188"/>
    </source>
</evidence>
<organism>
    <name type="scientific">Pan troglodytes</name>
    <name type="common">Chimpanzee</name>
    <dbReference type="NCBI Taxonomy" id="9598"/>
    <lineage>
        <taxon>Eukaryota</taxon>
        <taxon>Metazoa</taxon>
        <taxon>Chordata</taxon>
        <taxon>Craniata</taxon>
        <taxon>Vertebrata</taxon>
        <taxon>Euteleostomi</taxon>
        <taxon>Mammalia</taxon>
        <taxon>Eutheria</taxon>
        <taxon>Euarchontoglires</taxon>
        <taxon>Primates</taxon>
        <taxon>Haplorrhini</taxon>
        <taxon>Catarrhini</taxon>
        <taxon>Hominidae</taxon>
        <taxon>Pan</taxon>
    </lineage>
</organism>
<comment type="miscellaneous">
    <text>There are two types of hair/microfibrillar keratin, I (acidic) and II (neutral to basic).</text>
</comment>
<comment type="similarity">
    <text evidence="1">Belongs to the intermediate filament family.</text>
</comment>
<reference key="1">
    <citation type="journal article" date="2007" name="Gene">
        <title>Mapping of chimpanzee full-length cDNAs onto the human genome unveils large potential divergence of the transcriptome.</title>
        <authorList>
            <person name="Sakate R."/>
            <person name="Suto Y."/>
            <person name="Imanishi T."/>
            <person name="Tanoue T."/>
            <person name="Hida M."/>
            <person name="Hayasaka I."/>
            <person name="Kusuda J."/>
            <person name="Gojobori T."/>
            <person name="Hashimoto K."/>
            <person name="Hirai M."/>
        </authorList>
    </citation>
    <scope>NUCLEOTIDE SEQUENCE [MRNA]</scope>
    <source>
        <tissue>Skin</tissue>
    </source>
</reference>
<protein>
    <recommendedName>
        <fullName>Keratin, type I cuticular Ha1</fullName>
    </recommendedName>
    <alternativeName>
        <fullName>Hair keratin, type I Ha1</fullName>
    </alternativeName>
    <alternativeName>
        <fullName>Keratin-31</fullName>
        <shortName>K31</shortName>
    </alternativeName>
</protein>
<sequence length="416" mass="47247">MPYNFCLPSLSCRTSCSSRPCVPPSCHSCTLPGACNIPANVSNCNWFCEGSFNGSEKETMQFLNDRLASYLEKVRQLERDNAELENLIRERSQQQEPLLCPSYQSYFKTIEELQQKILCTKSENARLVVQIDNAKLAADDFRTKYQTELSLRQLVESDINGLRRILDELTLCKSDLEAQVESLKEELLCLKSNHEQEVNTLRCQLGDRLNVEVDAAPTVDLNRVLNETRSQYEALVETNRREVEQWFTTQTEELNKQVVSSSEQLQSYQAEIIELRRTVNALEIELQAQHNLRDSLENTLTESEARYSSQLSQVQSLITNVESQLAEIRSDLERQNQEYQVLLDVRARLECEINTYRSLLESEDCNLPSNPCATTNACSKPIGPCLSNPCTPCVPPAPCTPCAPRPRCGPCNSFVR</sequence>
<name>K1H1_PANTR</name>
<accession>A5A6M5</accession>